<name>PSBZ_SOLTU</name>
<reference key="1">
    <citation type="journal article" date="2006" name="Plant Cell Rep.">
        <title>The complete chloroplast genome sequences of Solanum tuberosum and comparative analysis with Solanaceae species identified the presence of a 241-bp deletion in cultivated potato chloroplast DNA sequence.</title>
        <authorList>
            <person name="Chung H.-J."/>
            <person name="Jung J.D."/>
            <person name="Park H.-W."/>
            <person name="Kim J.-H."/>
            <person name="Cha H.W."/>
            <person name="Min S.R."/>
            <person name="Jeong W.-J."/>
            <person name="Liu J.R."/>
        </authorList>
    </citation>
    <scope>NUCLEOTIDE SEQUENCE [LARGE SCALE GENOMIC DNA]</scope>
    <source>
        <strain>cv. Desiree</strain>
    </source>
</reference>
<reference key="2">
    <citation type="submission" date="2006-02" db="EMBL/GenBank/DDBJ databases">
        <title>Complete chloroplast genome sequences of Solanum tuberosum cultivar Desiree and comparative analyses with other Solanaceae genomes.</title>
        <authorList>
            <person name="Gargano D."/>
            <person name="Scotti N."/>
            <person name="Vezzi A."/>
            <person name="Bilardi A."/>
            <person name="Valle G."/>
            <person name="Grillo S."/>
            <person name="Cardi T."/>
        </authorList>
    </citation>
    <scope>NUCLEOTIDE SEQUENCE [LARGE SCALE GENOMIC DNA]</scope>
    <source>
        <strain>cv. Desiree</strain>
    </source>
</reference>
<dbReference type="EMBL" id="DQ231562">
    <property type="protein sequence ID" value="ABB90102.1"/>
    <property type="molecule type" value="Genomic_DNA"/>
</dbReference>
<dbReference type="EMBL" id="DQ386163">
    <property type="protein sequence ID" value="ABD47054.1"/>
    <property type="molecule type" value="Genomic_DNA"/>
</dbReference>
<dbReference type="RefSeq" id="YP_635636.1">
    <property type="nucleotide sequence ID" value="NC_008096.2"/>
</dbReference>
<dbReference type="SMR" id="Q2VEH9"/>
<dbReference type="FunCoup" id="Q2VEH9">
    <property type="interactions" value="66"/>
</dbReference>
<dbReference type="STRING" id="4113.Q2VEH9"/>
<dbReference type="GeneID" id="4099964"/>
<dbReference type="KEGG" id="sot:4099964"/>
<dbReference type="InParanoid" id="Q2VEH9"/>
<dbReference type="OrthoDB" id="1161947at2759"/>
<dbReference type="Proteomes" id="UP000011115">
    <property type="component" value="Unassembled WGS sequence"/>
</dbReference>
<dbReference type="GO" id="GO:0009535">
    <property type="term" value="C:chloroplast thylakoid membrane"/>
    <property type="evidence" value="ECO:0007669"/>
    <property type="project" value="UniProtKB-SubCell"/>
</dbReference>
<dbReference type="GO" id="GO:0009539">
    <property type="term" value="C:photosystem II reaction center"/>
    <property type="evidence" value="ECO:0007669"/>
    <property type="project" value="InterPro"/>
</dbReference>
<dbReference type="GO" id="GO:0015979">
    <property type="term" value="P:photosynthesis"/>
    <property type="evidence" value="ECO:0007669"/>
    <property type="project" value="UniProtKB-UniRule"/>
</dbReference>
<dbReference type="GO" id="GO:0042549">
    <property type="term" value="P:photosystem II stabilization"/>
    <property type="evidence" value="ECO:0007669"/>
    <property type="project" value="InterPro"/>
</dbReference>
<dbReference type="FunFam" id="1.10.287.740:FF:000001">
    <property type="entry name" value="Photosystem II reaction center protein Z"/>
    <property type="match status" value="1"/>
</dbReference>
<dbReference type="Gene3D" id="1.10.287.740">
    <property type="entry name" value="Photosystem II PsbZ, reaction centre"/>
    <property type="match status" value="1"/>
</dbReference>
<dbReference type="HAMAP" id="MF_00644">
    <property type="entry name" value="PSII_PsbZ"/>
    <property type="match status" value="1"/>
</dbReference>
<dbReference type="InterPro" id="IPR002644">
    <property type="entry name" value="PSII_PsbZ"/>
</dbReference>
<dbReference type="InterPro" id="IPR036512">
    <property type="entry name" value="PSII_PsbZ_sf"/>
</dbReference>
<dbReference type="NCBIfam" id="TIGR03043">
    <property type="entry name" value="PS_II_psbZ"/>
    <property type="match status" value="1"/>
</dbReference>
<dbReference type="PANTHER" id="PTHR34971">
    <property type="entry name" value="PHOTOSYSTEM II REACTION CENTER PROTEIN Z"/>
    <property type="match status" value="1"/>
</dbReference>
<dbReference type="PANTHER" id="PTHR34971:SF2">
    <property type="entry name" value="PHOTOSYSTEM II REACTION CENTER PROTEIN Z"/>
    <property type="match status" value="1"/>
</dbReference>
<dbReference type="Pfam" id="PF01737">
    <property type="entry name" value="Ycf9"/>
    <property type="match status" value="1"/>
</dbReference>
<dbReference type="SUPFAM" id="SSF161055">
    <property type="entry name" value="PsbZ-like"/>
    <property type="match status" value="1"/>
</dbReference>
<comment type="function">
    <text evidence="1">May control the interaction of photosystem II (PSII) cores with the light-harvesting antenna, regulates electron flow through the 2 photosystem reaction centers. PSII is a light-driven water plastoquinone oxidoreductase, using light energy to abstract electrons from H(2)O, generating a proton gradient subsequently used for ATP formation.</text>
</comment>
<comment type="subunit">
    <text evidence="1">PSII is composed of 1 copy each of membrane proteins PsbA, PsbB, PsbC, PsbD, PsbE, PsbF, PsbH, PsbI, PsbJ, PsbK, PsbL, PsbM, PsbT, PsbY, PsbZ, Psb30/Ycf12, at least 3 peripheral proteins of the oxygen-evolving complex and a large number of cofactors. It forms dimeric complexes.</text>
</comment>
<comment type="subcellular location">
    <subcellularLocation>
        <location evidence="1">Plastid</location>
        <location evidence="1">Chloroplast thylakoid membrane</location>
        <topology evidence="1">Multi-pass membrane protein</topology>
    </subcellularLocation>
</comment>
<comment type="similarity">
    <text evidence="1">Belongs to the PsbZ family.</text>
</comment>
<accession>Q2VEH9</accession>
<evidence type="ECO:0000255" key="1">
    <source>
        <dbReference type="HAMAP-Rule" id="MF_00644"/>
    </source>
</evidence>
<geneLocation type="chloroplast"/>
<proteinExistence type="inferred from homology"/>
<sequence length="62" mass="6553">MTLAFQLAVFALIATSLILLISVPVVFASPDGWSSNKNVVFSGTSLWIGLVFLVGILNSLIS</sequence>
<gene>
    <name evidence="1" type="primary">psbZ</name>
</gene>
<protein>
    <recommendedName>
        <fullName evidence="1">Photosystem II reaction center protein Z</fullName>
        <shortName evidence="1">PSII-Z</shortName>
    </recommendedName>
</protein>
<keyword id="KW-0150">Chloroplast</keyword>
<keyword id="KW-0472">Membrane</keyword>
<keyword id="KW-0602">Photosynthesis</keyword>
<keyword id="KW-0604">Photosystem II</keyword>
<keyword id="KW-0934">Plastid</keyword>
<keyword id="KW-0674">Reaction center</keyword>
<keyword id="KW-1185">Reference proteome</keyword>
<keyword id="KW-0793">Thylakoid</keyword>
<keyword id="KW-0812">Transmembrane</keyword>
<keyword id="KW-1133">Transmembrane helix</keyword>
<feature type="chain" id="PRO_0000277237" description="Photosystem II reaction center protein Z">
    <location>
        <begin position="1"/>
        <end position="62"/>
    </location>
</feature>
<feature type="transmembrane region" description="Helical" evidence="1">
    <location>
        <begin position="8"/>
        <end position="28"/>
    </location>
</feature>
<feature type="transmembrane region" description="Helical" evidence="1">
    <location>
        <begin position="41"/>
        <end position="61"/>
    </location>
</feature>
<organism>
    <name type="scientific">Solanum tuberosum</name>
    <name type="common">Potato</name>
    <dbReference type="NCBI Taxonomy" id="4113"/>
    <lineage>
        <taxon>Eukaryota</taxon>
        <taxon>Viridiplantae</taxon>
        <taxon>Streptophyta</taxon>
        <taxon>Embryophyta</taxon>
        <taxon>Tracheophyta</taxon>
        <taxon>Spermatophyta</taxon>
        <taxon>Magnoliopsida</taxon>
        <taxon>eudicotyledons</taxon>
        <taxon>Gunneridae</taxon>
        <taxon>Pentapetalae</taxon>
        <taxon>asterids</taxon>
        <taxon>lamiids</taxon>
        <taxon>Solanales</taxon>
        <taxon>Solanaceae</taxon>
        <taxon>Solanoideae</taxon>
        <taxon>Solaneae</taxon>
        <taxon>Solanum</taxon>
    </lineage>
</organism>